<name>CORI3_ARATH</name>
<feature type="chain" id="PRO_0000412729" description="Cystine lyase CORI3">
    <location>
        <begin position="1"/>
        <end position="422"/>
    </location>
</feature>
<feature type="splice variant" id="VSP_041764" description="In isoform 2." evidence="11">
    <location>
        <begin position="1"/>
        <end position="104"/>
    </location>
</feature>
<sequence length="422" mass="47039">MATLKCIDWQFSGSEAAKDAAAASLGSYTSALYALCDPHGKPILPPRNEILETSNTAEKAVVKAVLYGSGNAYAPSLGLAAAKSAVAEYLNQGLPKKLTADDVFMTLGCKQAIELAVDILAKPKANVLLPSPGFPWDLVRSIYKNLEVRHYNFLPEKNFEIDFDSVRALVDENTFAIFIINPHNPNGNTYSEAHLKQLAELAKELKIMVVSDEVFRWTLFGSNPFVPMGKFSSIVPVVTLGSISKGWKVPGWRTGWLTLHDLDGVFRNTKVLQAAQDFLQINNNPPTVIQAAIPDILEKTPQEFFDKRQSFLKDKVEFGYSKLKYIPSLTCYMKPEACTFLWTELDLSSFVDIEDDQDFCNKLAKEENLVVLPGIAFSQKNWLRHSIDMETPVLEDALERLKSFCDRHSNKKAPLKDVNGVK</sequence>
<proteinExistence type="evidence at protein level"/>
<dbReference type="EC" id="4.4.1.35" evidence="2"/>
<dbReference type="EMBL" id="AF268090">
    <property type="protein sequence ID" value="AAK82963.1"/>
    <property type="molecule type" value="mRNA"/>
</dbReference>
<dbReference type="EMBL" id="AL035394">
    <property type="protein sequence ID" value="CAA23026.1"/>
    <property type="molecule type" value="Genomic_DNA"/>
</dbReference>
<dbReference type="EMBL" id="AL161559">
    <property type="protein sequence ID" value="CAB79315.1"/>
    <property type="molecule type" value="Genomic_DNA"/>
</dbReference>
<dbReference type="EMBL" id="CP002687">
    <property type="protein sequence ID" value="AEE84781.1"/>
    <property type="molecule type" value="Genomic_DNA"/>
</dbReference>
<dbReference type="EMBL" id="CP002687">
    <property type="protein sequence ID" value="AEE84782.1"/>
    <property type="molecule type" value="Genomic_DNA"/>
</dbReference>
<dbReference type="EMBL" id="AY099811">
    <property type="protein sequence ID" value="AAM20662.1"/>
    <property type="molecule type" value="mRNA"/>
</dbReference>
<dbReference type="EMBL" id="BT000307">
    <property type="protein sequence ID" value="AAN15626.1"/>
    <property type="molecule type" value="mRNA"/>
</dbReference>
<dbReference type="EMBL" id="AK229608">
    <property type="protein sequence ID" value="BAF01453.1"/>
    <property type="molecule type" value="mRNA"/>
</dbReference>
<dbReference type="PIR" id="T05592">
    <property type="entry name" value="T05592"/>
</dbReference>
<dbReference type="RefSeq" id="NP_194091.1">
    <molecule id="Q9SUR6-1"/>
    <property type="nucleotide sequence ID" value="NM_118491.3"/>
</dbReference>
<dbReference type="RefSeq" id="NP_849430.1">
    <molecule id="Q9SUR6-2"/>
    <property type="nucleotide sequence ID" value="NM_179099.3"/>
</dbReference>
<dbReference type="SMR" id="Q9SUR6"/>
<dbReference type="BioGRID" id="13749">
    <property type="interactions" value="1"/>
</dbReference>
<dbReference type="FunCoup" id="Q9SUR6">
    <property type="interactions" value="300"/>
</dbReference>
<dbReference type="STRING" id="3702.Q9SUR6"/>
<dbReference type="PaxDb" id="3702-AT4G23600.1"/>
<dbReference type="ProteomicsDB" id="241110">
    <molecule id="Q9SUR6-1"/>
</dbReference>
<dbReference type="EnsemblPlants" id="AT4G23600.1">
    <molecule id="Q9SUR6-1"/>
    <property type="protein sequence ID" value="AT4G23600.1"/>
    <property type="gene ID" value="AT4G23600"/>
</dbReference>
<dbReference type="EnsemblPlants" id="AT4G23600.2">
    <molecule id="Q9SUR6-2"/>
    <property type="protein sequence ID" value="AT4G23600.2"/>
    <property type="gene ID" value="AT4G23600"/>
</dbReference>
<dbReference type="GeneID" id="828460"/>
<dbReference type="Gramene" id="AT4G23600.1">
    <molecule id="Q9SUR6-1"/>
    <property type="protein sequence ID" value="AT4G23600.1"/>
    <property type="gene ID" value="AT4G23600"/>
</dbReference>
<dbReference type="Gramene" id="AT4G23600.2">
    <molecule id="Q9SUR6-2"/>
    <property type="protein sequence ID" value="AT4G23600.2"/>
    <property type="gene ID" value="AT4G23600"/>
</dbReference>
<dbReference type="KEGG" id="ath:AT4G23600"/>
<dbReference type="Araport" id="AT4G23600"/>
<dbReference type="TAIR" id="AT4G23600">
    <property type="gene designation" value="CORI3"/>
</dbReference>
<dbReference type="eggNOG" id="KOG0259">
    <property type="taxonomic scope" value="Eukaryota"/>
</dbReference>
<dbReference type="InParanoid" id="Q9SUR6"/>
<dbReference type="OMA" id="MATTPMC"/>
<dbReference type="OrthoDB" id="7042322at2759"/>
<dbReference type="PhylomeDB" id="Q9SUR6"/>
<dbReference type="BioCyc" id="ARA:AT4G23600-MONOMER"/>
<dbReference type="BioCyc" id="MetaCyc:AT4G23600-MONOMER"/>
<dbReference type="BRENDA" id="4.4.1.35">
    <property type="organism ID" value="399"/>
</dbReference>
<dbReference type="PRO" id="PR:Q9SUR6"/>
<dbReference type="Proteomes" id="UP000006548">
    <property type="component" value="Chromosome 4"/>
</dbReference>
<dbReference type="ExpressionAtlas" id="Q9SUR6">
    <property type="expression patterns" value="baseline and differential"/>
</dbReference>
<dbReference type="GO" id="GO:0048046">
    <property type="term" value="C:apoplast"/>
    <property type="evidence" value="ECO:0007005"/>
    <property type="project" value="TAIR"/>
</dbReference>
<dbReference type="GO" id="GO:0005829">
    <property type="term" value="C:cytosol"/>
    <property type="evidence" value="ECO:0007005"/>
    <property type="project" value="TAIR"/>
</dbReference>
<dbReference type="GO" id="GO:0000325">
    <property type="term" value="C:plant-type vacuole"/>
    <property type="evidence" value="ECO:0007005"/>
    <property type="project" value="TAIR"/>
</dbReference>
<dbReference type="GO" id="GO:0044540">
    <property type="term" value="F:L-cystine L-cysteine-lyase (deaminating)"/>
    <property type="evidence" value="ECO:0007669"/>
    <property type="project" value="UniProtKB-EC"/>
</dbReference>
<dbReference type="GO" id="GO:0030170">
    <property type="term" value="F:pyridoxal phosphate binding"/>
    <property type="evidence" value="ECO:0007669"/>
    <property type="project" value="InterPro"/>
</dbReference>
<dbReference type="GO" id="GO:0008483">
    <property type="term" value="F:transaminase activity"/>
    <property type="evidence" value="ECO:0000303"/>
    <property type="project" value="TAIR"/>
</dbReference>
<dbReference type="GO" id="GO:0006520">
    <property type="term" value="P:amino acid metabolic process"/>
    <property type="evidence" value="ECO:0000270"/>
    <property type="project" value="TAIR"/>
</dbReference>
<dbReference type="GO" id="GO:0009058">
    <property type="term" value="P:biosynthetic process"/>
    <property type="evidence" value="ECO:0007669"/>
    <property type="project" value="InterPro"/>
</dbReference>
<dbReference type="GO" id="GO:0042538">
    <property type="term" value="P:hyperosmotic salinity response"/>
    <property type="evidence" value="ECO:0000304"/>
    <property type="project" value="TAIR"/>
</dbReference>
<dbReference type="GO" id="GO:0009737">
    <property type="term" value="P:response to abscisic acid"/>
    <property type="evidence" value="ECO:0000270"/>
    <property type="project" value="TAIR"/>
</dbReference>
<dbReference type="GO" id="GO:0009753">
    <property type="term" value="P:response to jasmonic acid"/>
    <property type="evidence" value="ECO:0000270"/>
    <property type="project" value="TAIR"/>
</dbReference>
<dbReference type="GO" id="GO:0010188">
    <property type="term" value="P:response to microbial phytotoxin"/>
    <property type="evidence" value="ECO:0000270"/>
    <property type="project" value="TAIR"/>
</dbReference>
<dbReference type="GO" id="GO:0009611">
    <property type="term" value="P:response to wounding"/>
    <property type="evidence" value="ECO:0000270"/>
    <property type="project" value="TAIR"/>
</dbReference>
<dbReference type="CDD" id="cd00609">
    <property type="entry name" value="AAT_like"/>
    <property type="match status" value="1"/>
</dbReference>
<dbReference type="FunFam" id="3.40.640.10:FF:000048">
    <property type="entry name" value="tyrosine aminotransferase"/>
    <property type="match status" value="1"/>
</dbReference>
<dbReference type="Gene3D" id="3.90.1150.10">
    <property type="entry name" value="Aspartate Aminotransferase, domain 1"/>
    <property type="match status" value="1"/>
</dbReference>
<dbReference type="Gene3D" id="3.40.640.10">
    <property type="entry name" value="Type I PLP-dependent aspartate aminotransferase-like (Major domain)"/>
    <property type="match status" value="1"/>
</dbReference>
<dbReference type="InterPro" id="IPR004839">
    <property type="entry name" value="Aminotransferase_I/II_large"/>
</dbReference>
<dbReference type="InterPro" id="IPR015424">
    <property type="entry name" value="PyrdxlP-dep_Trfase"/>
</dbReference>
<dbReference type="InterPro" id="IPR015421">
    <property type="entry name" value="PyrdxlP-dep_Trfase_major"/>
</dbReference>
<dbReference type="InterPro" id="IPR015422">
    <property type="entry name" value="PyrdxlP-dep_Trfase_small"/>
</dbReference>
<dbReference type="InterPro" id="IPR005958">
    <property type="entry name" value="TyrNic_aminoTrfase"/>
</dbReference>
<dbReference type="NCBIfam" id="TIGR01265">
    <property type="entry name" value="tyr_nico_aTase"/>
    <property type="match status" value="1"/>
</dbReference>
<dbReference type="PANTHER" id="PTHR45744:SF10">
    <property type="entry name" value="CYSTINE LYASE CORI3-RELATED"/>
    <property type="match status" value="1"/>
</dbReference>
<dbReference type="PANTHER" id="PTHR45744">
    <property type="entry name" value="TYROSINE AMINOTRANSFERASE"/>
    <property type="match status" value="1"/>
</dbReference>
<dbReference type="Pfam" id="PF00155">
    <property type="entry name" value="Aminotran_1_2"/>
    <property type="match status" value="1"/>
</dbReference>
<dbReference type="PIRSF" id="PIRSF000517">
    <property type="entry name" value="Tyr_transaminase"/>
    <property type="match status" value="1"/>
</dbReference>
<dbReference type="SUPFAM" id="SSF53383">
    <property type="entry name" value="PLP-dependent transferases"/>
    <property type="match status" value="1"/>
</dbReference>
<protein>
    <recommendedName>
        <fullName evidence="9">Cystine lyase CORI3</fullName>
        <ecNumber evidence="2">4.4.1.35</ecNumber>
    </recommendedName>
    <alternativeName>
        <fullName evidence="8">Protein CORONATINE INDUCED 3</fullName>
    </alternativeName>
    <alternativeName>
        <fullName evidence="10">Protein JASMONATE RESPONSIVE 2</fullName>
    </alternativeName>
</protein>
<accession>Q9SUR6</accession>
<accession>Q0WN47</accession>
<reference key="1">
    <citation type="journal article" date="2001" name="Plant Physiol.">
        <title>Cloning and characterization of a coronatine-regulated tyrosine aminotransferase from Arabidopsis.</title>
        <authorList>
            <person name="Lopukhina A."/>
            <person name="Dettenberg M."/>
            <person name="Weiler E.W."/>
            <person name="Hollander-Czytko H."/>
        </authorList>
    </citation>
    <scope>NUCLEOTIDE SEQUENCE [MRNA] (ISOFORM 1)</scope>
    <scope>SUBUNIT</scope>
    <scope>INDUCTION</scope>
</reference>
<reference key="2">
    <citation type="journal article" date="1999" name="Nature">
        <title>Sequence and analysis of chromosome 4 of the plant Arabidopsis thaliana.</title>
        <authorList>
            <person name="Mayer K.F.X."/>
            <person name="Schueller C."/>
            <person name="Wambutt R."/>
            <person name="Murphy G."/>
            <person name="Volckaert G."/>
            <person name="Pohl T."/>
            <person name="Duesterhoeft A."/>
            <person name="Stiekema W."/>
            <person name="Entian K.-D."/>
            <person name="Terryn N."/>
            <person name="Harris B."/>
            <person name="Ansorge W."/>
            <person name="Brandt P."/>
            <person name="Grivell L.A."/>
            <person name="Rieger M."/>
            <person name="Weichselgartner M."/>
            <person name="de Simone V."/>
            <person name="Obermaier B."/>
            <person name="Mache R."/>
            <person name="Mueller M."/>
            <person name="Kreis M."/>
            <person name="Delseny M."/>
            <person name="Puigdomenech P."/>
            <person name="Watson M."/>
            <person name="Schmidtheini T."/>
            <person name="Reichert B."/>
            <person name="Portetelle D."/>
            <person name="Perez-Alonso M."/>
            <person name="Boutry M."/>
            <person name="Bancroft I."/>
            <person name="Vos P."/>
            <person name="Hoheisel J."/>
            <person name="Zimmermann W."/>
            <person name="Wedler H."/>
            <person name="Ridley P."/>
            <person name="Langham S.-A."/>
            <person name="McCullagh B."/>
            <person name="Bilham L."/>
            <person name="Robben J."/>
            <person name="van der Schueren J."/>
            <person name="Grymonprez B."/>
            <person name="Chuang Y.-J."/>
            <person name="Vandenbussche F."/>
            <person name="Braeken M."/>
            <person name="Weltjens I."/>
            <person name="Voet M."/>
            <person name="Bastiaens I."/>
            <person name="Aert R."/>
            <person name="Defoor E."/>
            <person name="Weitzenegger T."/>
            <person name="Bothe G."/>
            <person name="Ramsperger U."/>
            <person name="Hilbert H."/>
            <person name="Braun M."/>
            <person name="Holzer E."/>
            <person name="Brandt A."/>
            <person name="Peters S."/>
            <person name="van Staveren M."/>
            <person name="Dirkse W."/>
            <person name="Mooijman P."/>
            <person name="Klein Lankhorst R."/>
            <person name="Rose M."/>
            <person name="Hauf J."/>
            <person name="Koetter P."/>
            <person name="Berneiser S."/>
            <person name="Hempel S."/>
            <person name="Feldpausch M."/>
            <person name="Lamberth S."/>
            <person name="Van den Daele H."/>
            <person name="De Keyser A."/>
            <person name="Buysshaert C."/>
            <person name="Gielen J."/>
            <person name="Villarroel R."/>
            <person name="De Clercq R."/>
            <person name="van Montagu M."/>
            <person name="Rogers J."/>
            <person name="Cronin A."/>
            <person name="Quail M.A."/>
            <person name="Bray-Allen S."/>
            <person name="Clark L."/>
            <person name="Doggett J."/>
            <person name="Hall S."/>
            <person name="Kay M."/>
            <person name="Lennard N."/>
            <person name="McLay K."/>
            <person name="Mayes R."/>
            <person name="Pettett A."/>
            <person name="Rajandream M.A."/>
            <person name="Lyne M."/>
            <person name="Benes V."/>
            <person name="Rechmann S."/>
            <person name="Borkova D."/>
            <person name="Bloecker H."/>
            <person name="Scharfe M."/>
            <person name="Grimm M."/>
            <person name="Loehnert T.-H."/>
            <person name="Dose S."/>
            <person name="de Haan M."/>
            <person name="Maarse A.C."/>
            <person name="Schaefer M."/>
            <person name="Mueller-Auer S."/>
            <person name="Gabel C."/>
            <person name="Fuchs M."/>
            <person name="Fartmann B."/>
            <person name="Granderath K."/>
            <person name="Dauner D."/>
            <person name="Herzl A."/>
            <person name="Neumann S."/>
            <person name="Argiriou A."/>
            <person name="Vitale D."/>
            <person name="Liguori R."/>
            <person name="Piravandi E."/>
            <person name="Massenet O."/>
            <person name="Quigley F."/>
            <person name="Clabauld G."/>
            <person name="Muendlein A."/>
            <person name="Felber R."/>
            <person name="Schnabl S."/>
            <person name="Hiller R."/>
            <person name="Schmidt W."/>
            <person name="Lecharny A."/>
            <person name="Aubourg S."/>
            <person name="Chefdor F."/>
            <person name="Cooke R."/>
            <person name="Berger C."/>
            <person name="Monfort A."/>
            <person name="Casacuberta E."/>
            <person name="Gibbons T."/>
            <person name="Weber N."/>
            <person name="Vandenbol M."/>
            <person name="Bargues M."/>
            <person name="Terol J."/>
            <person name="Torres A."/>
            <person name="Perez-Perez A."/>
            <person name="Purnelle B."/>
            <person name="Bent E."/>
            <person name="Johnson S."/>
            <person name="Tacon D."/>
            <person name="Jesse T."/>
            <person name="Heijnen L."/>
            <person name="Schwarz S."/>
            <person name="Scholler P."/>
            <person name="Heber S."/>
            <person name="Francs P."/>
            <person name="Bielke C."/>
            <person name="Frishman D."/>
            <person name="Haase D."/>
            <person name="Lemcke K."/>
            <person name="Mewes H.-W."/>
            <person name="Stocker S."/>
            <person name="Zaccaria P."/>
            <person name="Bevan M."/>
            <person name="Wilson R.K."/>
            <person name="de la Bastide M."/>
            <person name="Habermann K."/>
            <person name="Parnell L."/>
            <person name="Dedhia N."/>
            <person name="Gnoj L."/>
            <person name="Schutz K."/>
            <person name="Huang E."/>
            <person name="Spiegel L."/>
            <person name="Sekhon M."/>
            <person name="Murray J."/>
            <person name="Sheet P."/>
            <person name="Cordes M."/>
            <person name="Abu-Threideh J."/>
            <person name="Stoneking T."/>
            <person name="Kalicki J."/>
            <person name="Graves T."/>
            <person name="Harmon G."/>
            <person name="Edwards J."/>
            <person name="Latreille P."/>
            <person name="Courtney L."/>
            <person name="Cloud J."/>
            <person name="Abbott A."/>
            <person name="Scott K."/>
            <person name="Johnson D."/>
            <person name="Minx P."/>
            <person name="Bentley D."/>
            <person name="Fulton B."/>
            <person name="Miller N."/>
            <person name="Greco T."/>
            <person name="Kemp K."/>
            <person name="Kramer J."/>
            <person name="Fulton L."/>
            <person name="Mardis E."/>
            <person name="Dante M."/>
            <person name="Pepin K."/>
            <person name="Hillier L.W."/>
            <person name="Nelson J."/>
            <person name="Spieth J."/>
            <person name="Ryan E."/>
            <person name="Andrews S."/>
            <person name="Geisel C."/>
            <person name="Layman D."/>
            <person name="Du H."/>
            <person name="Ali J."/>
            <person name="Berghoff A."/>
            <person name="Jones K."/>
            <person name="Drone K."/>
            <person name="Cotton M."/>
            <person name="Joshu C."/>
            <person name="Antonoiu B."/>
            <person name="Zidanic M."/>
            <person name="Strong C."/>
            <person name="Sun H."/>
            <person name="Lamar B."/>
            <person name="Yordan C."/>
            <person name="Ma P."/>
            <person name="Zhong J."/>
            <person name="Preston R."/>
            <person name="Vil D."/>
            <person name="Shekher M."/>
            <person name="Matero A."/>
            <person name="Shah R."/>
            <person name="Swaby I.K."/>
            <person name="O'Shaughnessy A."/>
            <person name="Rodriguez M."/>
            <person name="Hoffman J."/>
            <person name="Till S."/>
            <person name="Granat S."/>
            <person name="Shohdy N."/>
            <person name="Hasegawa A."/>
            <person name="Hameed A."/>
            <person name="Lodhi M."/>
            <person name="Johnson A."/>
            <person name="Chen E."/>
            <person name="Marra M.A."/>
            <person name="Martienssen R."/>
            <person name="McCombie W.R."/>
        </authorList>
    </citation>
    <scope>NUCLEOTIDE SEQUENCE [LARGE SCALE GENOMIC DNA]</scope>
    <source>
        <strain>cv. Columbia</strain>
    </source>
</reference>
<reference key="3">
    <citation type="journal article" date="2017" name="Plant J.">
        <title>Araport11: a complete reannotation of the Arabidopsis thaliana reference genome.</title>
        <authorList>
            <person name="Cheng C.Y."/>
            <person name="Krishnakumar V."/>
            <person name="Chan A.P."/>
            <person name="Thibaud-Nissen F."/>
            <person name="Schobel S."/>
            <person name="Town C.D."/>
        </authorList>
    </citation>
    <scope>GENOME REANNOTATION</scope>
    <source>
        <strain>cv. Columbia</strain>
    </source>
</reference>
<reference key="4">
    <citation type="journal article" date="2003" name="Science">
        <title>Empirical analysis of transcriptional activity in the Arabidopsis genome.</title>
        <authorList>
            <person name="Yamada K."/>
            <person name="Lim J."/>
            <person name="Dale J.M."/>
            <person name="Chen H."/>
            <person name="Shinn P."/>
            <person name="Palm C.J."/>
            <person name="Southwick A.M."/>
            <person name="Wu H.C."/>
            <person name="Kim C.J."/>
            <person name="Nguyen M."/>
            <person name="Pham P.K."/>
            <person name="Cheuk R.F."/>
            <person name="Karlin-Newmann G."/>
            <person name="Liu S.X."/>
            <person name="Lam B."/>
            <person name="Sakano H."/>
            <person name="Wu T."/>
            <person name="Yu G."/>
            <person name="Miranda M."/>
            <person name="Quach H.L."/>
            <person name="Tripp M."/>
            <person name="Chang C.H."/>
            <person name="Lee J.M."/>
            <person name="Toriumi M.J."/>
            <person name="Chan M.M."/>
            <person name="Tang C.C."/>
            <person name="Onodera C.S."/>
            <person name="Deng J.M."/>
            <person name="Akiyama K."/>
            <person name="Ansari Y."/>
            <person name="Arakawa T."/>
            <person name="Banh J."/>
            <person name="Banno F."/>
            <person name="Bowser L."/>
            <person name="Brooks S.Y."/>
            <person name="Carninci P."/>
            <person name="Chao Q."/>
            <person name="Choy N."/>
            <person name="Enju A."/>
            <person name="Goldsmith A.D."/>
            <person name="Gurjal M."/>
            <person name="Hansen N.F."/>
            <person name="Hayashizaki Y."/>
            <person name="Johnson-Hopson C."/>
            <person name="Hsuan V.W."/>
            <person name="Iida K."/>
            <person name="Karnes M."/>
            <person name="Khan S."/>
            <person name="Koesema E."/>
            <person name="Ishida J."/>
            <person name="Jiang P.X."/>
            <person name="Jones T."/>
            <person name="Kawai J."/>
            <person name="Kamiya A."/>
            <person name="Meyers C."/>
            <person name="Nakajima M."/>
            <person name="Narusaka M."/>
            <person name="Seki M."/>
            <person name="Sakurai T."/>
            <person name="Satou M."/>
            <person name="Tamse R."/>
            <person name="Vaysberg M."/>
            <person name="Wallender E.K."/>
            <person name="Wong C."/>
            <person name="Yamamura Y."/>
            <person name="Yuan S."/>
            <person name="Shinozaki K."/>
            <person name="Davis R.W."/>
            <person name="Theologis A."/>
            <person name="Ecker J.R."/>
        </authorList>
    </citation>
    <scope>NUCLEOTIDE SEQUENCE [LARGE SCALE MRNA] (ISOFORM 1)</scope>
    <source>
        <strain>cv. Columbia</strain>
    </source>
</reference>
<reference key="5">
    <citation type="submission" date="2006-07" db="EMBL/GenBank/DDBJ databases">
        <title>Large-scale analysis of RIKEN Arabidopsis full-length (RAFL) cDNAs.</title>
        <authorList>
            <person name="Totoki Y."/>
            <person name="Seki M."/>
            <person name="Ishida J."/>
            <person name="Nakajima M."/>
            <person name="Enju A."/>
            <person name="Kamiya A."/>
            <person name="Narusaka M."/>
            <person name="Shin-i T."/>
            <person name="Nakagawa M."/>
            <person name="Sakamoto N."/>
            <person name="Oishi K."/>
            <person name="Kohara Y."/>
            <person name="Kobayashi M."/>
            <person name="Toyoda A."/>
            <person name="Sakaki Y."/>
            <person name="Sakurai T."/>
            <person name="Iida K."/>
            <person name="Akiyama K."/>
            <person name="Satou M."/>
            <person name="Toyoda T."/>
            <person name="Konagaya A."/>
            <person name="Carninci P."/>
            <person name="Kawai J."/>
            <person name="Hayashizaki Y."/>
            <person name="Shinozaki K."/>
        </authorList>
    </citation>
    <scope>NUCLEOTIDE SEQUENCE [LARGE SCALE MRNA] (ISOFORM 2)</scope>
    <source>
        <strain>cv. Columbia</strain>
    </source>
</reference>
<reference key="6">
    <citation type="journal article" date="1997" name="Plant Physiol.">
        <title>Jasmonic acid-dependent and -independent signaling pathways control wound-induced gene activation in Arabidopsis thaliana.</title>
        <authorList>
            <person name="Titarenko E."/>
            <person name="Rojo E."/>
            <person name="Leon J."/>
            <person name="Sanchez-Serrano J.J."/>
        </authorList>
    </citation>
    <scope>INDUCTION</scope>
</reference>
<reference key="7">
    <citation type="journal article" date="2003" name="J. Biol. Chem.">
        <title>A new member of plant CS-lyases. A cystine lyase from Arabidopsis thaliana.</title>
        <authorList>
            <person name="Jones P.R."/>
            <person name="Manabe T."/>
            <person name="Awazuhara M."/>
            <person name="Saito K."/>
        </authorList>
    </citation>
    <scope>FUNCTION</scope>
    <scope>CATALYTIC ACTIVITY</scope>
    <scope>COFACTOR</scope>
</reference>
<reference key="8">
    <citation type="journal article" date="2005" name="J. Plant Physiol.">
        <title>Tocopherol content and activities of tyrosine aminotransferase and cystine lyase in Arabidopsis under stress conditions.</title>
        <authorList>
            <person name="Hollaender-Czytko H."/>
            <person name="Grabowski J."/>
            <person name="Sandorf I."/>
            <person name="Weckermann K."/>
            <person name="Weiler E.W."/>
        </authorList>
    </citation>
    <scope>INDUCTION BY CORONATINE</scope>
</reference>
<reference key="9">
    <citation type="journal article" date="2008" name="Planta">
        <title>The role of JAR1 in Jasmonoyl-L: -isoleucine production during Arabidopsis wound response.</title>
        <authorList>
            <person name="Suza W.P."/>
            <person name="Staswick P.E."/>
        </authorList>
    </citation>
    <scope>INDUCTION BY WOUNDING</scope>
</reference>
<reference key="10">
    <citation type="journal article" date="2009" name="Plant Cell Physiol.">
        <title>Enhanced defense responses in Arabidopsis induced by the cell wall protein fractions from Pythium oligandrum require SGT1, RAR1, NPR1 and JAR1.</title>
        <authorList>
            <person name="Kawamura Y."/>
            <person name="Takenaka S."/>
            <person name="Hase S."/>
            <person name="Kubota M."/>
            <person name="Ichinose Y."/>
            <person name="Kanayama Y."/>
            <person name="Nakaho K."/>
            <person name="Klessig D.F."/>
            <person name="Takahashi H."/>
        </authorList>
    </citation>
    <scope>INDUCTION</scope>
</reference>
<reference key="11">
    <citation type="journal article" date="2011" name="Plant Cell Rep.">
        <title>The Arabidopsis CORI3 promoter contains two cis-acting regulatory regions required for transcriptional activity in companion cells.</title>
        <authorList>
            <person name="Tsuwamoto R."/>
            <person name="Harada T."/>
        </authorList>
    </citation>
    <scope>TISSUE SPECIFICITY</scope>
</reference>
<gene>
    <name evidence="8" type="primary">CORI3</name>
    <name evidence="10" type="synonym">JR2</name>
    <name evidence="15" type="ordered locus">At4g23600</name>
    <name evidence="16" type="ORF">F9D16.70</name>
</gene>
<evidence type="ECO:0000269" key="1">
    <source>
    </source>
</evidence>
<evidence type="ECO:0000269" key="2">
    <source>
    </source>
</evidence>
<evidence type="ECO:0000269" key="3">
    <source>
    </source>
</evidence>
<evidence type="ECO:0000269" key="4">
    <source>
    </source>
</evidence>
<evidence type="ECO:0000269" key="5">
    <source>
    </source>
</evidence>
<evidence type="ECO:0000269" key="6">
    <source>
    </source>
</evidence>
<evidence type="ECO:0000269" key="7">
    <source>
    </source>
</evidence>
<evidence type="ECO:0000303" key="8">
    <source>
    </source>
</evidence>
<evidence type="ECO:0000303" key="9">
    <source>
    </source>
</evidence>
<evidence type="ECO:0000303" key="10">
    <source>
    </source>
</evidence>
<evidence type="ECO:0000303" key="11">
    <source ref="5"/>
</evidence>
<evidence type="ECO:0000305" key="12"/>
<evidence type="ECO:0000305" key="13">
    <source>
    </source>
</evidence>
<evidence type="ECO:0000305" key="14">
    <source>
    </source>
</evidence>
<evidence type="ECO:0000312" key="15">
    <source>
        <dbReference type="Araport" id="AT4G23600"/>
    </source>
</evidence>
<evidence type="ECO:0000312" key="16">
    <source>
        <dbReference type="EMBL" id="CAA23026.1"/>
    </source>
</evidence>
<organism>
    <name type="scientific">Arabidopsis thaliana</name>
    <name type="common">Mouse-ear cress</name>
    <dbReference type="NCBI Taxonomy" id="3702"/>
    <lineage>
        <taxon>Eukaryota</taxon>
        <taxon>Viridiplantae</taxon>
        <taxon>Streptophyta</taxon>
        <taxon>Embryophyta</taxon>
        <taxon>Tracheophyta</taxon>
        <taxon>Spermatophyta</taxon>
        <taxon>Magnoliopsida</taxon>
        <taxon>eudicotyledons</taxon>
        <taxon>Gunneridae</taxon>
        <taxon>Pentapetalae</taxon>
        <taxon>rosids</taxon>
        <taxon>malvids</taxon>
        <taxon>Brassicales</taxon>
        <taxon>Brassicaceae</taxon>
        <taxon>Camelineae</taxon>
        <taxon>Arabidopsis</taxon>
    </lineage>
</organism>
<comment type="function">
    <text evidence="2">Possesses cystine lyase activity in vitro. Does not possess tyrosine aminotransferase, alanine aminotransferase, aspartate aminotransferase and tryptophan aminotransferase activities.</text>
</comment>
<comment type="catalytic activity">
    <reaction evidence="2">
        <text>L-cystine + H2O = S-sulfanyl-L-cysteine + pyruvate + NH4(+)</text>
        <dbReference type="Rhea" id="RHEA:24927"/>
        <dbReference type="ChEBI" id="CHEBI:15361"/>
        <dbReference type="ChEBI" id="CHEBI:15377"/>
        <dbReference type="ChEBI" id="CHEBI:28938"/>
        <dbReference type="ChEBI" id="CHEBI:35491"/>
        <dbReference type="ChEBI" id="CHEBI:58591"/>
        <dbReference type="EC" id="4.4.1.35"/>
    </reaction>
</comment>
<comment type="cofactor">
    <cofactor evidence="2">
        <name>pyridoxal 5'-phosphate</name>
        <dbReference type="ChEBI" id="CHEBI:597326"/>
    </cofactor>
</comment>
<comment type="subunit">
    <text evidence="13">Homodimer.</text>
</comment>
<comment type="alternative products">
    <event type="alternative splicing"/>
    <isoform>
        <id>Q9SUR6-1</id>
        <name>1</name>
        <sequence type="displayed"/>
    </isoform>
    <isoform>
        <id>Q9SUR6-2</id>
        <name>2</name>
        <sequence type="described" ref="VSP_041764"/>
    </isoform>
</comment>
<comment type="tissue specificity">
    <text evidence="6">Expressed in cotyledons, sepals, pistils, flower buds, phloem companion cells and vascular tissues of petiole, leaf, filament and fruit.</text>
</comment>
<comment type="induction">
    <text evidence="1 3 4 5 7">Induced by jasmonate (PubMed:11500565, PubMed:9342878). Induced by coronatine (PubMed:11500565, PubMed:16008101). Induced by 12-oxo-phytodienoic acid (OPDA) (PubMed:11500565). Induced by wounding (PubMed:11500565, PubMed:18247047, PubMed:9342878). Induced by abscisic acid (ABA) (PubMed:9342878). Induced by the cell wall elicitin from the non-pathogenic biocontrol agent Pythium oligandrum (PubMed:19304739).</text>
</comment>
<comment type="miscellaneous">
    <text evidence="7">Induction by wounding requires COI1.</text>
</comment>
<comment type="similarity">
    <text evidence="12">Belongs to the class-I pyridoxal-phosphate-dependent aminotransferase family.</text>
</comment>
<comment type="caution">
    <text evidence="13 14">CORI3 was initially isolated by Lopukhina et al (PMID:11500565) as tyrosine aminotransferase (TAT). The authors also measured a TAT activity in vitro, even though relatively weak. Jones et al (PMID:12525491) showed that CORI3 possesses cystine lyase (CL) activity, but lacks TAT activity in vitro. In addition, CL activity is not inhibited by saturation of L-tyrosine in the medium. As CORI3 should bind L-tyrosine to catalyze TAT activity, this excludes a TAT activity for CORI3. Jones et al. made the statment that TAT activity resulted probably from residual native TAT-catalyzing proteins present in the purified preparations employed by Loupokhina et al.</text>
</comment>
<keyword id="KW-0025">Alternative splicing</keyword>
<keyword id="KW-0456">Lyase</keyword>
<keyword id="KW-0663">Pyridoxal phosphate</keyword>
<keyword id="KW-1185">Reference proteome</keyword>